<evidence type="ECO:0000250" key="1"/>
<evidence type="ECO:0000255" key="2">
    <source>
        <dbReference type="PROSITE-ProRule" id="PRU00125"/>
    </source>
</evidence>
<evidence type="ECO:0000256" key="3">
    <source>
        <dbReference type="SAM" id="MobiDB-lite"/>
    </source>
</evidence>
<evidence type="ECO:0000269" key="4">
    <source>
    </source>
</evidence>
<evidence type="ECO:0000303" key="5">
    <source>
    </source>
</evidence>
<evidence type="ECO:0000305" key="6"/>
<proteinExistence type="evidence at protein level"/>
<accession>Q6Q6R5</accession>
<accession>A2A436</accession>
<accession>Q5T043</accession>
<accession>Q6Q6R4</accession>
<accession>Q6Q6R6</accession>
<accession>Q6Q6R7</accession>
<dbReference type="EMBL" id="AY555741">
    <property type="protein sequence ID" value="AAS66887.1"/>
    <property type="molecule type" value="mRNA"/>
</dbReference>
<dbReference type="EMBL" id="AY555742">
    <property type="protein sequence ID" value="AAS66888.1"/>
    <property type="molecule type" value="mRNA"/>
</dbReference>
<dbReference type="EMBL" id="AY555743">
    <property type="protein sequence ID" value="AAS66889.1"/>
    <property type="molecule type" value="mRNA"/>
</dbReference>
<dbReference type="EMBL" id="AY555744">
    <property type="protein sequence ID" value="AAS66890.1"/>
    <property type="molecule type" value="mRNA"/>
</dbReference>
<dbReference type="EMBL" id="AL583834">
    <property type="status" value="NOT_ANNOTATED_CDS"/>
    <property type="molecule type" value="Genomic_DNA"/>
</dbReference>
<dbReference type="CCDS" id="CCDS4894.2">
    <molecule id="Q6Q6R5-3"/>
</dbReference>
<dbReference type="RefSeq" id="NP_996805.2">
    <molecule id="Q6Q6R5-3"/>
    <property type="nucleotide sequence ID" value="NM_206922.3"/>
</dbReference>
<dbReference type="RefSeq" id="XP_005249160.1">
    <property type="nucleotide sequence ID" value="XM_005249103.3"/>
</dbReference>
<dbReference type="RefSeq" id="XP_011512911.1">
    <property type="nucleotide sequence ID" value="XM_011514609.2"/>
</dbReference>
<dbReference type="BioGRID" id="135005">
    <property type="interactions" value="2"/>
</dbReference>
<dbReference type="IntAct" id="Q6Q6R5">
    <property type="interactions" value="2"/>
</dbReference>
<dbReference type="STRING" id="9606.ENSP00000361650"/>
<dbReference type="GlyGen" id="Q6Q6R5">
    <property type="glycosylation" value="1 site"/>
</dbReference>
<dbReference type="iPTMnet" id="Q6Q6R5"/>
<dbReference type="PhosphoSitePlus" id="Q6Q6R5"/>
<dbReference type="SwissPalm" id="Q6Q6R5"/>
<dbReference type="BioMuta" id="CRIP3"/>
<dbReference type="DMDM" id="92087061"/>
<dbReference type="MassIVE" id="Q6Q6R5"/>
<dbReference type="PaxDb" id="9606-ENSP00000361650"/>
<dbReference type="PeptideAtlas" id="Q6Q6R5"/>
<dbReference type="ProteomicsDB" id="67271">
    <molecule id="Q6Q6R5-1"/>
</dbReference>
<dbReference type="ProteomicsDB" id="67272">
    <molecule id="Q6Q6R5-2"/>
</dbReference>
<dbReference type="ProteomicsDB" id="67273">
    <molecule id="Q6Q6R5-3"/>
</dbReference>
<dbReference type="ProteomicsDB" id="67274">
    <molecule id="Q6Q6R5-4"/>
</dbReference>
<dbReference type="Antibodypedia" id="50337">
    <property type="antibodies" value="8 antibodies from 7 providers"/>
</dbReference>
<dbReference type="DNASU" id="401262"/>
<dbReference type="Ensembl" id="ENST00000274990.4">
    <molecule id="Q6Q6R5-1"/>
    <property type="protein sequence ID" value="ENSP00000274990.4"/>
    <property type="gene ID" value="ENSG00000146215.14"/>
</dbReference>
<dbReference type="Ensembl" id="ENST00000372569.8">
    <molecule id="Q6Q6R5-3"/>
    <property type="protein sequence ID" value="ENSP00000361650.3"/>
    <property type="gene ID" value="ENSG00000146215.14"/>
</dbReference>
<dbReference type="GeneID" id="401262"/>
<dbReference type="KEGG" id="hsa:401262"/>
<dbReference type="MANE-Select" id="ENST00000372569.8">
    <molecule id="Q6Q6R5-3"/>
    <property type="protein sequence ID" value="ENSP00000361650.3"/>
    <property type="RefSeq nucleotide sequence ID" value="NM_206922.3"/>
    <property type="RefSeq protein sequence ID" value="NP_996805.2"/>
</dbReference>
<dbReference type="UCSC" id="uc003ouu.2">
    <molecule id="Q6Q6R5-1"/>
    <property type="organism name" value="human"/>
</dbReference>
<dbReference type="AGR" id="HGNC:17751"/>
<dbReference type="CTD" id="401262"/>
<dbReference type="DisGeNET" id="401262"/>
<dbReference type="GeneCards" id="CRIP3"/>
<dbReference type="HGNC" id="HGNC:17751">
    <property type="gene designation" value="CRIP3"/>
</dbReference>
<dbReference type="HPA" id="ENSG00000146215">
    <property type="expression patterns" value="Tissue enhanced (heart muscle, testis)"/>
</dbReference>
<dbReference type="neXtProt" id="NX_Q6Q6R5"/>
<dbReference type="OpenTargets" id="ENSG00000146215"/>
<dbReference type="PharmGKB" id="PA134929489"/>
<dbReference type="VEuPathDB" id="HostDB:ENSG00000146215"/>
<dbReference type="eggNOG" id="KOG1700">
    <property type="taxonomic scope" value="Eukaryota"/>
</dbReference>
<dbReference type="GeneTree" id="ENSGT00940000161321"/>
<dbReference type="HOGENOM" id="CLU_054591_2_0_1"/>
<dbReference type="InParanoid" id="Q6Q6R5"/>
<dbReference type="OMA" id="PRHWPKV"/>
<dbReference type="OrthoDB" id="1679758at2759"/>
<dbReference type="PAN-GO" id="Q6Q6R5">
    <property type="GO annotations" value="0 GO annotations based on evolutionary models"/>
</dbReference>
<dbReference type="PhylomeDB" id="Q6Q6R5"/>
<dbReference type="TreeFam" id="TF313758"/>
<dbReference type="PathwayCommons" id="Q6Q6R5"/>
<dbReference type="SignaLink" id="Q6Q6R5"/>
<dbReference type="BioGRID-ORCS" id="401262">
    <property type="hits" value="17 hits in 1145 CRISPR screens"/>
</dbReference>
<dbReference type="ChiTaRS" id="CRIP3">
    <property type="organism name" value="human"/>
</dbReference>
<dbReference type="GenomeRNAi" id="401262"/>
<dbReference type="Pharos" id="Q6Q6R5">
    <property type="development level" value="Tdark"/>
</dbReference>
<dbReference type="PRO" id="PR:Q6Q6R5"/>
<dbReference type="Proteomes" id="UP000005640">
    <property type="component" value="Chromosome 6"/>
</dbReference>
<dbReference type="RNAct" id="Q6Q6R5">
    <property type="molecule type" value="protein"/>
</dbReference>
<dbReference type="Bgee" id="ENSG00000146215">
    <property type="expression patterns" value="Expressed in apex of heart and 111 other cell types or tissues"/>
</dbReference>
<dbReference type="ExpressionAtlas" id="Q6Q6R5">
    <property type="expression patterns" value="baseline and differential"/>
</dbReference>
<dbReference type="GO" id="GO:0005737">
    <property type="term" value="C:cytoplasm"/>
    <property type="evidence" value="ECO:0007669"/>
    <property type="project" value="UniProtKB-SubCell"/>
</dbReference>
<dbReference type="GO" id="GO:0046872">
    <property type="term" value="F:metal ion binding"/>
    <property type="evidence" value="ECO:0007669"/>
    <property type="project" value="UniProtKB-KW"/>
</dbReference>
<dbReference type="CDD" id="cd09476">
    <property type="entry name" value="LIM1_TLP"/>
    <property type="match status" value="1"/>
</dbReference>
<dbReference type="CDD" id="cd09477">
    <property type="entry name" value="LIM2_TLP"/>
    <property type="match status" value="1"/>
</dbReference>
<dbReference type="FunFam" id="2.10.110.10:FF:000025">
    <property type="entry name" value="Cysteine-rich protein 2"/>
    <property type="match status" value="2"/>
</dbReference>
<dbReference type="Gene3D" id="2.10.110.10">
    <property type="entry name" value="Cysteine Rich Protein"/>
    <property type="match status" value="2"/>
</dbReference>
<dbReference type="InterPro" id="IPR001781">
    <property type="entry name" value="Znf_LIM"/>
</dbReference>
<dbReference type="PANTHER" id="PTHR46074:SF4">
    <property type="entry name" value="CYSTEINE-RICH PROTEIN 3"/>
    <property type="match status" value="1"/>
</dbReference>
<dbReference type="PANTHER" id="PTHR46074">
    <property type="entry name" value="CYSTEINE-RICH PROTEIN CRIP FAMILY MEMBER"/>
    <property type="match status" value="1"/>
</dbReference>
<dbReference type="Pfam" id="PF00412">
    <property type="entry name" value="LIM"/>
    <property type="match status" value="2"/>
</dbReference>
<dbReference type="SMART" id="SM00132">
    <property type="entry name" value="LIM"/>
    <property type="match status" value="2"/>
</dbReference>
<dbReference type="SUPFAM" id="SSF57716">
    <property type="entry name" value="Glucocorticoid receptor-like (DNA-binding domain)"/>
    <property type="match status" value="4"/>
</dbReference>
<dbReference type="PROSITE" id="PS00478">
    <property type="entry name" value="LIM_DOMAIN_1"/>
    <property type="match status" value="2"/>
</dbReference>
<dbReference type="PROSITE" id="PS50023">
    <property type="entry name" value="LIM_DOMAIN_2"/>
    <property type="match status" value="2"/>
</dbReference>
<feature type="chain" id="PRO_0000225638" description="Cysteine-rich protein 3">
    <location>
        <begin position="1"/>
        <end position="217"/>
    </location>
</feature>
<feature type="domain" description="LIM zinc-binding 1" evidence="2">
    <location>
        <begin position="3"/>
        <end position="64"/>
    </location>
</feature>
<feature type="domain" description="LIM zinc-binding 2" evidence="2">
    <location>
        <begin position="122"/>
        <end position="183"/>
    </location>
</feature>
<feature type="region of interest" description="Disordered" evidence="3">
    <location>
        <begin position="84"/>
        <end position="112"/>
    </location>
</feature>
<feature type="splice variant" id="VSP_017391" description="In isoform 4." evidence="5">
    <original>HDGVPYCHVPCYGYLFGPKGGQPHPRHWDGMYMPEVWHVHGLWVCVDNFPCG</original>
    <variation>V</variation>
    <location>
        <begin position="166"/>
        <end position="217"/>
    </location>
</feature>
<feature type="splice variant" id="VSP_017393" description="In isoform 3." evidence="5">
    <original>GQPHPRHWDGMYMPEVWHVHGLWVCVDNFPCG</original>
    <variation>VNIGDVGCYIYDPVKIKFK</variation>
    <location>
        <begin position="186"/>
        <end position="217"/>
    </location>
</feature>
<feature type="splice variant" id="VSP_017392" description="In isoform 2." evidence="5">
    <original>HGLWVCVDNFPCG</original>
    <variation>V</variation>
    <location>
        <begin position="205"/>
        <end position="217"/>
    </location>
</feature>
<feature type="sequence conflict" description="In Ref. 1; AAS66887/AAS66888/AAS66889/AAS66890." evidence="6" ref="1">
    <original>G</original>
    <variation>S</variation>
    <location>
        <position position="141"/>
    </location>
</feature>
<feature type="sequence conflict" description="In Ref. 1; AAS66887/AAS66888/AAS66889/AAS66890." evidence="6" ref="1">
    <original>C</original>
    <variation>R</variation>
    <location>
        <position position="148"/>
    </location>
</feature>
<organism>
    <name type="scientific">Homo sapiens</name>
    <name type="common">Human</name>
    <dbReference type="NCBI Taxonomy" id="9606"/>
    <lineage>
        <taxon>Eukaryota</taxon>
        <taxon>Metazoa</taxon>
        <taxon>Chordata</taxon>
        <taxon>Craniata</taxon>
        <taxon>Vertebrata</taxon>
        <taxon>Euteleostomi</taxon>
        <taxon>Mammalia</taxon>
        <taxon>Eutheria</taxon>
        <taxon>Euarchontoglires</taxon>
        <taxon>Primates</taxon>
        <taxon>Haplorrhini</taxon>
        <taxon>Catarrhini</taxon>
        <taxon>Hominidae</taxon>
        <taxon>Homo</taxon>
    </lineage>
</organism>
<name>CRIP3_HUMAN</name>
<gene>
    <name type="primary">CRIP3</name>
    <name type="synonym">CRP3</name>
</gene>
<protein>
    <recommendedName>
        <fullName>Cysteine-rich protein 3</fullName>
        <shortName>CRP-3</shortName>
    </recommendedName>
    <alternativeName>
        <fullName>Chromosome 6 LIM domain only protein</fullName>
        <shortName>h6LIMo</shortName>
    </alternativeName>
</protein>
<keyword id="KW-0025">Alternative splicing</keyword>
<keyword id="KW-0963">Cytoplasm</keyword>
<keyword id="KW-0440">LIM domain</keyword>
<keyword id="KW-0479">Metal-binding</keyword>
<keyword id="KW-1267">Proteomics identification</keyword>
<keyword id="KW-1185">Reference proteome</keyword>
<keyword id="KW-0677">Repeat</keyword>
<keyword id="KW-0862">Zinc</keyword>
<sequence length="217" mass="24088">MSWTCPRCQQPVFFAEKVSSLGKNWHRFCLKCERCHSILSPGGHAEHNGRPYCHKPCYGALFGPRGVNIGGVGSYLYNPPTPSPGCTTPLSPSSFSPPRPRTGLPQGKKSPPHMKTFTGETSLCPGCGEPVYFAEKVMSLGRNWHRPCLRCQRCHKTLTAGSHAEHDGVPYCHVPCYGYLFGPKGGQPHPRHWDGMYMPEVWHVHGLWVCVDNFPCG</sequence>
<reference key="1">
    <citation type="journal article" date="2004" name="Microbes Infect.">
        <title>The human and mouse orthologous LIM-only proteins respectively encoded in chromosome 6 and 17 show a different expression pattern.</title>
        <authorList>
            <person name="Casrouge A."/>
            <person name="Veitia R."/>
            <person name="Kirchner J."/>
            <person name="Bevan M.J."/>
            <person name="Kanellopoulos J."/>
        </authorList>
    </citation>
    <scope>NUCLEOTIDE SEQUENCE [MRNA] (ISOFORMS 1; 2; 3 AND 4)</scope>
    <scope>TISSUE SPECIFICITY</scope>
</reference>
<reference key="2">
    <citation type="journal article" date="2003" name="Nature">
        <title>The DNA sequence and analysis of human chromosome 6.</title>
        <authorList>
            <person name="Mungall A.J."/>
            <person name="Palmer S.A."/>
            <person name="Sims S.K."/>
            <person name="Edwards C.A."/>
            <person name="Ashurst J.L."/>
            <person name="Wilming L."/>
            <person name="Jones M.C."/>
            <person name="Horton R."/>
            <person name="Hunt S.E."/>
            <person name="Scott C.E."/>
            <person name="Gilbert J.G.R."/>
            <person name="Clamp M.E."/>
            <person name="Bethel G."/>
            <person name="Milne S."/>
            <person name="Ainscough R."/>
            <person name="Almeida J.P."/>
            <person name="Ambrose K.D."/>
            <person name="Andrews T.D."/>
            <person name="Ashwell R.I.S."/>
            <person name="Babbage A.K."/>
            <person name="Bagguley C.L."/>
            <person name="Bailey J."/>
            <person name="Banerjee R."/>
            <person name="Barker D.J."/>
            <person name="Barlow K.F."/>
            <person name="Bates K."/>
            <person name="Beare D.M."/>
            <person name="Beasley H."/>
            <person name="Beasley O."/>
            <person name="Bird C.P."/>
            <person name="Blakey S.E."/>
            <person name="Bray-Allen S."/>
            <person name="Brook J."/>
            <person name="Brown A.J."/>
            <person name="Brown J.Y."/>
            <person name="Burford D.C."/>
            <person name="Burrill W."/>
            <person name="Burton J."/>
            <person name="Carder C."/>
            <person name="Carter N.P."/>
            <person name="Chapman J.C."/>
            <person name="Clark S.Y."/>
            <person name="Clark G."/>
            <person name="Clee C.M."/>
            <person name="Clegg S."/>
            <person name="Cobley V."/>
            <person name="Collier R.E."/>
            <person name="Collins J.E."/>
            <person name="Colman L.K."/>
            <person name="Corby N.R."/>
            <person name="Coville G.J."/>
            <person name="Culley K.M."/>
            <person name="Dhami P."/>
            <person name="Davies J."/>
            <person name="Dunn M."/>
            <person name="Earthrowl M.E."/>
            <person name="Ellington A.E."/>
            <person name="Evans K.A."/>
            <person name="Faulkner L."/>
            <person name="Francis M.D."/>
            <person name="Frankish A."/>
            <person name="Frankland J."/>
            <person name="French L."/>
            <person name="Garner P."/>
            <person name="Garnett J."/>
            <person name="Ghori M.J."/>
            <person name="Gilby L.M."/>
            <person name="Gillson C.J."/>
            <person name="Glithero R.J."/>
            <person name="Grafham D.V."/>
            <person name="Grant M."/>
            <person name="Gribble S."/>
            <person name="Griffiths C."/>
            <person name="Griffiths M.N.D."/>
            <person name="Hall R."/>
            <person name="Halls K.S."/>
            <person name="Hammond S."/>
            <person name="Harley J.L."/>
            <person name="Hart E.A."/>
            <person name="Heath P.D."/>
            <person name="Heathcott R."/>
            <person name="Holmes S.J."/>
            <person name="Howden P.J."/>
            <person name="Howe K.L."/>
            <person name="Howell G.R."/>
            <person name="Huckle E."/>
            <person name="Humphray S.J."/>
            <person name="Humphries M.D."/>
            <person name="Hunt A.R."/>
            <person name="Johnson C.M."/>
            <person name="Joy A.A."/>
            <person name="Kay M."/>
            <person name="Keenan S.J."/>
            <person name="Kimberley A.M."/>
            <person name="King A."/>
            <person name="Laird G.K."/>
            <person name="Langford C."/>
            <person name="Lawlor S."/>
            <person name="Leongamornlert D.A."/>
            <person name="Leversha M."/>
            <person name="Lloyd C.R."/>
            <person name="Lloyd D.M."/>
            <person name="Loveland J.E."/>
            <person name="Lovell J."/>
            <person name="Martin S."/>
            <person name="Mashreghi-Mohammadi M."/>
            <person name="Maslen G.L."/>
            <person name="Matthews L."/>
            <person name="McCann O.T."/>
            <person name="McLaren S.J."/>
            <person name="McLay K."/>
            <person name="McMurray A."/>
            <person name="Moore M.J.F."/>
            <person name="Mullikin J.C."/>
            <person name="Niblett D."/>
            <person name="Nickerson T."/>
            <person name="Novik K.L."/>
            <person name="Oliver K."/>
            <person name="Overton-Larty E.K."/>
            <person name="Parker A."/>
            <person name="Patel R."/>
            <person name="Pearce A.V."/>
            <person name="Peck A.I."/>
            <person name="Phillimore B.J.C.T."/>
            <person name="Phillips S."/>
            <person name="Plumb R.W."/>
            <person name="Porter K.M."/>
            <person name="Ramsey Y."/>
            <person name="Ranby S.A."/>
            <person name="Rice C.M."/>
            <person name="Ross M.T."/>
            <person name="Searle S.M."/>
            <person name="Sehra H.K."/>
            <person name="Sheridan E."/>
            <person name="Skuce C.D."/>
            <person name="Smith S."/>
            <person name="Smith M."/>
            <person name="Spraggon L."/>
            <person name="Squares S.L."/>
            <person name="Steward C.A."/>
            <person name="Sycamore N."/>
            <person name="Tamlyn-Hall G."/>
            <person name="Tester J."/>
            <person name="Theaker A.J."/>
            <person name="Thomas D.W."/>
            <person name="Thorpe A."/>
            <person name="Tracey A."/>
            <person name="Tromans A."/>
            <person name="Tubby B."/>
            <person name="Wall M."/>
            <person name="Wallis J.M."/>
            <person name="West A.P."/>
            <person name="White S.S."/>
            <person name="Whitehead S.L."/>
            <person name="Whittaker H."/>
            <person name="Wild A."/>
            <person name="Willey D.J."/>
            <person name="Wilmer T.E."/>
            <person name="Wood J.M."/>
            <person name="Wray P.W."/>
            <person name="Wyatt J.C."/>
            <person name="Young L."/>
            <person name="Younger R.M."/>
            <person name="Bentley D.R."/>
            <person name="Coulson A."/>
            <person name="Durbin R.M."/>
            <person name="Hubbard T."/>
            <person name="Sulston J.E."/>
            <person name="Dunham I."/>
            <person name="Rogers J."/>
            <person name="Beck S."/>
        </authorList>
    </citation>
    <scope>NUCLEOTIDE SEQUENCE [LARGE SCALE GENOMIC DNA]</scope>
</reference>
<comment type="interaction">
    <interactant intactId="EBI-12925520">
        <id>Q6Q6R5-3</id>
    </interactant>
    <interactant intactId="EBI-741101">
        <id>Q13643</id>
        <label>FHL3</label>
    </interactant>
    <organismsDiffer>false</organismsDiffer>
    <experiments>3</experiments>
</comment>
<comment type="interaction">
    <interactant intactId="EBI-12925520">
        <id>Q6Q6R5-3</id>
    </interactant>
    <interactant intactId="EBI-741582">
        <id>O60568</id>
        <label>PLOD3</label>
    </interactant>
    <organismsDiffer>false</organismsDiffer>
    <experiments>3</experiments>
</comment>
<comment type="subcellular location">
    <subcellularLocation>
        <location evidence="1">Cytoplasm</location>
    </subcellularLocation>
</comment>
<comment type="alternative products">
    <event type="alternative splicing"/>
    <isoform>
        <id>Q6Q6R5-1</id>
        <name>1</name>
        <name>C</name>
        <sequence type="displayed"/>
    </isoform>
    <isoform>
        <id>Q6Q6R5-2</id>
        <name>2</name>
        <name>B</name>
        <sequence type="described" ref="VSP_017392"/>
    </isoform>
    <isoform>
        <id>Q6Q6R5-3</id>
        <name>3</name>
        <name>A</name>
        <sequence type="described" ref="VSP_017393"/>
    </isoform>
    <isoform>
        <id>Q6Q6R5-4</id>
        <name>4</name>
        <name>D</name>
        <sequence type="described" ref="VSP_017391"/>
    </isoform>
</comment>
<comment type="tissue specificity">
    <text evidence="4">Expressed in most tissues, but not in skeletal muscle.</text>
</comment>